<dbReference type="EMBL" id="CP000511">
    <property type="protein sequence ID" value="ABM12146.1"/>
    <property type="molecule type" value="Genomic_DNA"/>
</dbReference>
<dbReference type="RefSeq" id="WP_011778576.1">
    <property type="nucleotide sequence ID" value="NZ_JACKSD010000069.1"/>
</dbReference>
<dbReference type="SMR" id="A1T4P6"/>
<dbReference type="STRING" id="350058.Mvan_1312"/>
<dbReference type="KEGG" id="mva:Mvan_1312"/>
<dbReference type="eggNOG" id="COG0197">
    <property type="taxonomic scope" value="Bacteria"/>
</dbReference>
<dbReference type="HOGENOM" id="CLU_078858_2_1_11"/>
<dbReference type="Proteomes" id="UP000009159">
    <property type="component" value="Chromosome"/>
</dbReference>
<dbReference type="GO" id="GO:0022625">
    <property type="term" value="C:cytosolic large ribosomal subunit"/>
    <property type="evidence" value="ECO:0007669"/>
    <property type="project" value="TreeGrafter"/>
</dbReference>
<dbReference type="GO" id="GO:0019843">
    <property type="term" value="F:rRNA binding"/>
    <property type="evidence" value="ECO:0007669"/>
    <property type="project" value="UniProtKB-UniRule"/>
</dbReference>
<dbReference type="GO" id="GO:0003735">
    <property type="term" value="F:structural constituent of ribosome"/>
    <property type="evidence" value="ECO:0007669"/>
    <property type="project" value="InterPro"/>
</dbReference>
<dbReference type="GO" id="GO:0000049">
    <property type="term" value="F:tRNA binding"/>
    <property type="evidence" value="ECO:0007669"/>
    <property type="project" value="UniProtKB-KW"/>
</dbReference>
<dbReference type="GO" id="GO:0006412">
    <property type="term" value="P:translation"/>
    <property type="evidence" value="ECO:0007669"/>
    <property type="project" value="UniProtKB-UniRule"/>
</dbReference>
<dbReference type="CDD" id="cd01433">
    <property type="entry name" value="Ribosomal_L16_L10e"/>
    <property type="match status" value="1"/>
</dbReference>
<dbReference type="FunFam" id="3.90.1170.10:FF:000001">
    <property type="entry name" value="50S ribosomal protein L16"/>
    <property type="match status" value="1"/>
</dbReference>
<dbReference type="Gene3D" id="3.90.1170.10">
    <property type="entry name" value="Ribosomal protein L10e/L16"/>
    <property type="match status" value="1"/>
</dbReference>
<dbReference type="HAMAP" id="MF_01342">
    <property type="entry name" value="Ribosomal_uL16"/>
    <property type="match status" value="1"/>
</dbReference>
<dbReference type="InterPro" id="IPR047873">
    <property type="entry name" value="Ribosomal_uL16"/>
</dbReference>
<dbReference type="InterPro" id="IPR000114">
    <property type="entry name" value="Ribosomal_uL16_bact-type"/>
</dbReference>
<dbReference type="InterPro" id="IPR020798">
    <property type="entry name" value="Ribosomal_uL16_CS"/>
</dbReference>
<dbReference type="InterPro" id="IPR016180">
    <property type="entry name" value="Ribosomal_uL16_dom"/>
</dbReference>
<dbReference type="InterPro" id="IPR036920">
    <property type="entry name" value="Ribosomal_uL16_sf"/>
</dbReference>
<dbReference type="NCBIfam" id="TIGR01164">
    <property type="entry name" value="rplP_bact"/>
    <property type="match status" value="1"/>
</dbReference>
<dbReference type="PANTHER" id="PTHR12220">
    <property type="entry name" value="50S/60S RIBOSOMAL PROTEIN L16"/>
    <property type="match status" value="1"/>
</dbReference>
<dbReference type="PANTHER" id="PTHR12220:SF13">
    <property type="entry name" value="LARGE RIBOSOMAL SUBUNIT PROTEIN UL16M"/>
    <property type="match status" value="1"/>
</dbReference>
<dbReference type="Pfam" id="PF00252">
    <property type="entry name" value="Ribosomal_L16"/>
    <property type="match status" value="1"/>
</dbReference>
<dbReference type="PRINTS" id="PR00060">
    <property type="entry name" value="RIBOSOMALL16"/>
</dbReference>
<dbReference type="SUPFAM" id="SSF54686">
    <property type="entry name" value="Ribosomal protein L16p/L10e"/>
    <property type="match status" value="1"/>
</dbReference>
<dbReference type="PROSITE" id="PS00586">
    <property type="entry name" value="RIBOSOMAL_L16_1"/>
    <property type="match status" value="1"/>
</dbReference>
<dbReference type="PROSITE" id="PS00701">
    <property type="entry name" value="RIBOSOMAL_L16_2"/>
    <property type="match status" value="1"/>
</dbReference>
<comment type="function">
    <text evidence="1">Binds 23S rRNA and is also seen to make contacts with the A and possibly P site tRNAs.</text>
</comment>
<comment type="subunit">
    <text evidence="1">Part of the 50S ribosomal subunit.</text>
</comment>
<comment type="similarity">
    <text evidence="1">Belongs to the universal ribosomal protein uL16 family.</text>
</comment>
<name>RL16_MYCVP</name>
<protein>
    <recommendedName>
        <fullName evidence="1">Large ribosomal subunit protein uL16</fullName>
    </recommendedName>
    <alternativeName>
        <fullName evidence="3">50S ribosomal protein L16</fullName>
    </alternativeName>
</protein>
<evidence type="ECO:0000255" key="1">
    <source>
        <dbReference type="HAMAP-Rule" id="MF_01342"/>
    </source>
</evidence>
<evidence type="ECO:0000256" key="2">
    <source>
        <dbReference type="SAM" id="MobiDB-lite"/>
    </source>
</evidence>
<evidence type="ECO:0000305" key="3"/>
<accession>A1T4P6</accession>
<proteinExistence type="inferred from homology"/>
<sequence>MLIPRKVKHRKQHHPKQRGIASGGTSVSFGDYGIQALGHAYVTNRQIESARIAINRHIKRGGKVWINIFPDRPLTKKPAETRMGSGKGSPEWWVANVKPGRVLFELSYPDEKIAREALTRAIHKLPIKARIVTREEQF</sequence>
<gene>
    <name evidence="1" type="primary">rplP</name>
    <name type="ordered locus">Mvan_1312</name>
</gene>
<organism>
    <name type="scientific">Mycolicibacterium vanbaalenii (strain DSM 7251 / JCM 13017 / BCRC 16820 / KCTC 9966 / NRRL B-24157 / PYR-1)</name>
    <name type="common">Mycobacterium vanbaalenii</name>
    <dbReference type="NCBI Taxonomy" id="350058"/>
    <lineage>
        <taxon>Bacteria</taxon>
        <taxon>Bacillati</taxon>
        <taxon>Actinomycetota</taxon>
        <taxon>Actinomycetes</taxon>
        <taxon>Mycobacteriales</taxon>
        <taxon>Mycobacteriaceae</taxon>
        <taxon>Mycolicibacterium</taxon>
    </lineage>
</organism>
<reference key="1">
    <citation type="submission" date="2006-12" db="EMBL/GenBank/DDBJ databases">
        <title>Complete sequence of Mycobacterium vanbaalenii PYR-1.</title>
        <authorList>
            <consortium name="US DOE Joint Genome Institute"/>
            <person name="Copeland A."/>
            <person name="Lucas S."/>
            <person name="Lapidus A."/>
            <person name="Barry K."/>
            <person name="Detter J.C."/>
            <person name="Glavina del Rio T."/>
            <person name="Hammon N."/>
            <person name="Israni S."/>
            <person name="Dalin E."/>
            <person name="Tice H."/>
            <person name="Pitluck S."/>
            <person name="Singan V."/>
            <person name="Schmutz J."/>
            <person name="Larimer F."/>
            <person name="Land M."/>
            <person name="Hauser L."/>
            <person name="Kyrpides N."/>
            <person name="Anderson I.J."/>
            <person name="Miller C."/>
            <person name="Richardson P."/>
        </authorList>
    </citation>
    <scope>NUCLEOTIDE SEQUENCE [LARGE SCALE GENOMIC DNA]</scope>
    <source>
        <strain>DSM 7251 / JCM 13017 / BCRC 16820 / KCTC 9966 / NRRL B-24157 / PYR-1</strain>
    </source>
</reference>
<keyword id="KW-0687">Ribonucleoprotein</keyword>
<keyword id="KW-0689">Ribosomal protein</keyword>
<keyword id="KW-0694">RNA-binding</keyword>
<keyword id="KW-0699">rRNA-binding</keyword>
<keyword id="KW-0820">tRNA-binding</keyword>
<feature type="chain" id="PRO_1000054660" description="Large ribosomal subunit protein uL16">
    <location>
        <begin position="1"/>
        <end position="138"/>
    </location>
</feature>
<feature type="region of interest" description="Disordered" evidence="2">
    <location>
        <begin position="1"/>
        <end position="24"/>
    </location>
</feature>
<feature type="compositionally biased region" description="Basic residues" evidence="2">
    <location>
        <begin position="1"/>
        <end position="17"/>
    </location>
</feature>